<feature type="chain" id="PRO_0000279747" description="Epimerase family protein SDR39U1">
    <location>
        <begin position="1"/>
        <end position="294"/>
    </location>
</feature>
<feature type="binding site" evidence="2">
    <location>
        <begin position="31"/>
        <end position="32"/>
    </location>
    <ligand>
        <name>NADP(+)</name>
        <dbReference type="ChEBI" id="CHEBI:58349"/>
    </ligand>
</feature>
<feature type="binding site" evidence="2">
    <location>
        <begin position="58"/>
        <end position="59"/>
    </location>
    <ligand>
        <name>NADP(+)</name>
        <dbReference type="ChEBI" id="CHEBI:58349"/>
    </ligand>
</feature>
<feature type="binding site" evidence="2">
    <location>
        <position position="77"/>
    </location>
    <ligand>
        <name>NADP(+)</name>
        <dbReference type="ChEBI" id="CHEBI:58349"/>
    </ligand>
</feature>
<feature type="binding site" evidence="2">
    <location>
        <position position="82"/>
    </location>
    <ligand>
        <name>NADP(+)</name>
        <dbReference type="ChEBI" id="CHEBI:58349"/>
    </ligand>
</feature>
<feature type="binding site" evidence="2">
    <location>
        <position position="160"/>
    </location>
    <ligand>
        <name>NADP(+)</name>
        <dbReference type="ChEBI" id="CHEBI:58349"/>
    </ligand>
</feature>
<evidence type="ECO:0000250" key="1"/>
<evidence type="ECO:0000250" key="2">
    <source>
        <dbReference type="UniProtKB" id="Q9NRG7"/>
    </source>
</evidence>
<evidence type="ECO:0000305" key="3"/>
<keyword id="KW-0521">NADP</keyword>
<keyword id="KW-0560">Oxidoreductase</keyword>
<keyword id="KW-1185">Reference proteome</keyword>
<gene>
    <name type="primary">SDR39U1</name>
</gene>
<reference key="1">
    <citation type="submission" date="2006-06" db="EMBL/GenBank/DDBJ databases">
        <authorList>
            <consortium name="NIH - Mammalian Gene Collection (MGC) project"/>
        </authorList>
    </citation>
    <scope>NUCLEOTIDE SEQUENCE [LARGE SCALE MRNA]</scope>
    <source>
        <strain>Hereford</strain>
        <tissue>Fetal pons</tissue>
    </source>
</reference>
<sequence>MRVLVGGGTGFIGTALTQLLKARGHEVTLISRKPGPDRITWDDLTTSGLPRCDAAVNLAGENILNPLRRWNAAFQKEVLSSRLETTQTLARAIAKAPQPPQAWVLVTGVAYYQPSLTAEYDEDSPGGDFDFFSNLVTKWEAAARLPGDSTRQVVVRSGVVLGRGGGAIGHMLLPFRLGLGGPIGSGHQFFPWIHIRDLAGILAHALETSHVQGILNGVAPASSTTNAEFARALGTALGRPAFIPLPSAVVQAVFGRERAVMLLEGQKVVPRRTLAAGYRYSFPELGAALKEVIA</sequence>
<name>D39U1_BOVIN</name>
<accession>Q17QH8</accession>
<organism>
    <name type="scientific">Bos taurus</name>
    <name type="common">Bovine</name>
    <dbReference type="NCBI Taxonomy" id="9913"/>
    <lineage>
        <taxon>Eukaryota</taxon>
        <taxon>Metazoa</taxon>
        <taxon>Chordata</taxon>
        <taxon>Craniata</taxon>
        <taxon>Vertebrata</taxon>
        <taxon>Euteleostomi</taxon>
        <taxon>Mammalia</taxon>
        <taxon>Eutheria</taxon>
        <taxon>Laurasiatheria</taxon>
        <taxon>Artiodactyla</taxon>
        <taxon>Ruminantia</taxon>
        <taxon>Pecora</taxon>
        <taxon>Bovidae</taxon>
        <taxon>Bovinae</taxon>
        <taxon>Bos</taxon>
    </lineage>
</organism>
<comment type="function">
    <text evidence="1">Putative NADP-dependent oxidoreductase.</text>
</comment>
<comment type="similarity">
    <text evidence="3">Belongs to the NAD(P)-dependent epimerase/dehydratase family. SDR39U1 subfamily.</text>
</comment>
<dbReference type="EC" id="1.1.1.-"/>
<dbReference type="EMBL" id="BC118349">
    <property type="protein sequence ID" value="AAI18350.1"/>
    <property type="molecule type" value="mRNA"/>
</dbReference>
<dbReference type="RefSeq" id="NP_001069280.1">
    <property type="nucleotide sequence ID" value="NM_001075812.2"/>
</dbReference>
<dbReference type="SMR" id="Q17QH8"/>
<dbReference type="FunCoup" id="Q17QH8">
    <property type="interactions" value="697"/>
</dbReference>
<dbReference type="STRING" id="9913.ENSBTAP00000044527"/>
<dbReference type="PaxDb" id="9913-ENSBTAP00000044527"/>
<dbReference type="GeneID" id="520897"/>
<dbReference type="KEGG" id="bta:520897"/>
<dbReference type="CTD" id="56948"/>
<dbReference type="eggNOG" id="KOG3019">
    <property type="taxonomic scope" value="Eukaryota"/>
</dbReference>
<dbReference type="InParanoid" id="Q17QH8"/>
<dbReference type="OrthoDB" id="276721at2759"/>
<dbReference type="Proteomes" id="UP000009136">
    <property type="component" value="Unplaced"/>
</dbReference>
<dbReference type="GO" id="GO:0016491">
    <property type="term" value="F:oxidoreductase activity"/>
    <property type="evidence" value="ECO:0007669"/>
    <property type="project" value="UniProtKB-KW"/>
</dbReference>
<dbReference type="CDD" id="cd05242">
    <property type="entry name" value="SDR_a8"/>
    <property type="match status" value="1"/>
</dbReference>
<dbReference type="Gene3D" id="3.40.50.720">
    <property type="entry name" value="NAD(P)-binding Rossmann-like Domain"/>
    <property type="match status" value="1"/>
</dbReference>
<dbReference type="InterPro" id="IPR013549">
    <property type="entry name" value="DUF1731"/>
</dbReference>
<dbReference type="InterPro" id="IPR001509">
    <property type="entry name" value="Epimerase_deHydtase"/>
</dbReference>
<dbReference type="InterPro" id="IPR036291">
    <property type="entry name" value="NAD(P)-bd_dom_sf"/>
</dbReference>
<dbReference type="InterPro" id="IPR010099">
    <property type="entry name" value="SDR39U1"/>
</dbReference>
<dbReference type="NCBIfam" id="TIGR01777">
    <property type="entry name" value="yfcH"/>
    <property type="match status" value="1"/>
</dbReference>
<dbReference type="PANTHER" id="PTHR11092:SF0">
    <property type="entry name" value="EPIMERASE FAMILY PROTEIN SDR39U1"/>
    <property type="match status" value="1"/>
</dbReference>
<dbReference type="PANTHER" id="PTHR11092">
    <property type="entry name" value="SUGAR NUCLEOTIDE EPIMERASE RELATED"/>
    <property type="match status" value="1"/>
</dbReference>
<dbReference type="Pfam" id="PF08338">
    <property type="entry name" value="DUF1731"/>
    <property type="match status" value="1"/>
</dbReference>
<dbReference type="Pfam" id="PF01370">
    <property type="entry name" value="Epimerase"/>
    <property type="match status" value="1"/>
</dbReference>
<dbReference type="SUPFAM" id="SSF51735">
    <property type="entry name" value="NAD(P)-binding Rossmann-fold domains"/>
    <property type="match status" value="1"/>
</dbReference>
<proteinExistence type="evidence at transcript level"/>
<protein>
    <recommendedName>
        <fullName>Epimerase family protein SDR39U1</fullName>
        <ecNumber>1.1.1.-</ecNumber>
    </recommendedName>
    <alternativeName>
        <fullName evidence="2">Short-chain dehydrogenase/reductase family 39U member 1</fullName>
    </alternativeName>
</protein>